<feature type="chain" id="PRO_0000052503" description="Globin, major polymeric component P1">
    <location>
        <begin position="1"/>
        <end position="147"/>
    </location>
</feature>
<feature type="domain" description="Globin" evidence="1">
    <location>
        <begin position="2"/>
        <end position="146"/>
    </location>
</feature>
<feature type="binding site" description="proximal binding residue" evidence="1">
    <location>
        <position position="96"/>
    </location>
    <ligand>
        <name>heme b</name>
        <dbReference type="ChEBI" id="CHEBI:60344"/>
    </ligand>
    <ligandPart>
        <name>Fe</name>
        <dbReference type="ChEBI" id="CHEBI:18248"/>
    </ligandPart>
</feature>
<sequence length="147" mass="16019">MHLTADQVAALKASWPEVSAGDGGAQLGLEMFTKYFHENPQMMFIFGYSGRTEALKHSSKLQHHGKVIIDQIGKAVAEMDNAKQMAGTLHALGVRHKGFGDIRAEFFPALGMCLLDAMEEKVPGLNRTLWAAAYREISDACIAGLQS</sequence>
<dbReference type="EMBL" id="X54060">
    <property type="protein sequence ID" value="CAA37995.1"/>
    <property type="molecule type" value="mRNA"/>
</dbReference>
<dbReference type="PIR" id="S13157">
    <property type="entry name" value="S13157"/>
</dbReference>
<dbReference type="SMR" id="P23216"/>
<dbReference type="GO" id="GO:0020037">
    <property type="term" value="F:heme binding"/>
    <property type="evidence" value="ECO:0007669"/>
    <property type="project" value="InterPro"/>
</dbReference>
<dbReference type="GO" id="GO:0046872">
    <property type="term" value="F:metal ion binding"/>
    <property type="evidence" value="ECO:0007669"/>
    <property type="project" value="UniProtKB-KW"/>
</dbReference>
<dbReference type="GO" id="GO:0019825">
    <property type="term" value="F:oxygen binding"/>
    <property type="evidence" value="ECO:0007669"/>
    <property type="project" value="InterPro"/>
</dbReference>
<dbReference type="GO" id="GO:0005344">
    <property type="term" value="F:oxygen carrier activity"/>
    <property type="evidence" value="ECO:0007669"/>
    <property type="project" value="UniProtKB-KW"/>
</dbReference>
<dbReference type="CDD" id="cd01040">
    <property type="entry name" value="Mb-like"/>
    <property type="match status" value="1"/>
</dbReference>
<dbReference type="Gene3D" id="1.10.490.10">
    <property type="entry name" value="Globins"/>
    <property type="match status" value="1"/>
</dbReference>
<dbReference type="InterPro" id="IPR000971">
    <property type="entry name" value="Globin"/>
</dbReference>
<dbReference type="InterPro" id="IPR050532">
    <property type="entry name" value="Globin-like_OT"/>
</dbReference>
<dbReference type="InterPro" id="IPR009050">
    <property type="entry name" value="Globin-like_sf"/>
</dbReference>
<dbReference type="InterPro" id="IPR012292">
    <property type="entry name" value="Globin/Proto"/>
</dbReference>
<dbReference type="InterPro" id="IPR044399">
    <property type="entry name" value="Mb-like_M"/>
</dbReference>
<dbReference type="PANTHER" id="PTHR46458">
    <property type="entry name" value="BLR2807 PROTEIN"/>
    <property type="match status" value="1"/>
</dbReference>
<dbReference type="PANTHER" id="PTHR46458:SF1">
    <property type="entry name" value="GEO09476P1"/>
    <property type="match status" value="1"/>
</dbReference>
<dbReference type="Pfam" id="PF00042">
    <property type="entry name" value="Globin"/>
    <property type="match status" value="1"/>
</dbReference>
<dbReference type="PRINTS" id="PR01907">
    <property type="entry name" value="WORMGLOBIN"/>
</dbReference>
<dbReference type="SUPFAM" id="SSF46458">
    <property type="entry name" value="Globin-like"/>
    <property type="match status" value="1"/>
</dbReference>
<dbReference type="PROSITE" id="PS01033">
    <property type="entry name" value="GLOBIN"/>
    <property type="match status" value="1"/>
</dbReference>
<keyword id="KW-0903">Direct protein sequencing</keyword>
<keyword id="KW-0349">Heme</keyword>
<keyword id="KW-0408">Iron</keyword>
<keyword id="KW-0479">Metal-binding</keyword>
<keyword id="KW-0561">Oxygen transport</keyword>
<keyword id="KW-0813">Transport</keyword>
<evidence type="ECO:0000255" key="1">
    <source>
        <dbReference type="PROSITE-ProRule" id="PRU00238"/>
    </source>
</evidence>
<accession>P23216</accession>
<name>GLBP1_GLYDI</name>
<reference key="1">
    <citation type="journal article" date="1990" name="Biochim. Biophys. Acta">
        <title>The heterogeneity of the polymeric intracellular hemoglobin of Glycera dibranchiata and the cDNA-derived amino acid sequence of one component.</title>
        <authorList>
            <person name="Zafar R.S."/>
            <person name="Chow L.H."/>
            <person name="Stern M.S."/>
            <person name="Vinogradov S.N."/>
            <person name="Walz D.A."/>
        </authorList>
    </citation>
    <scope>NUCLEOTIDE SEQUENCE [MRNA]</scope>
    <scope>PROTEIN SEQUENCE OF 1-27; 98-102 AND 119-145</scope>
</reference>
<protein>
    <recommendedName>
        <fullName>Globin, major polymeric component P1</fullName>
    </recommendedName>
</protein>
<comment type="subunit">
    <text>Polymer.</text>
</comment>
<comment type="miscellaneous">
    <text>This protein is one of at least six components in the polymeric fraction of Glycera hemoglobin.</text>
</comment>
<comment type="similarity">
    <text evidence="1">Belongs to the globin family.</text>
</comment>
<organism>
    <name type="scientific">Glycera dibranchiata</name>
    <name type="common">Bloodworm</name>
    <dbReference type="NCBI Taxonomy" id="6350"/>
    <lineage>
        <taxon>Eukaryota</taxon>
        <taxon>Metazoa</taxon>
        <taxon>Spiralia</taxon>
        <taxon>Lophotrochozoa</taxon>
        <taxon>Annelida</taxon>
        <taxon>Polychaeta</taxon>
        <taxon>Errantia</taxon>
        <taxon>Phyllodocida</taxon>
        <taxon>Glyceridae</taxon>
        <taxon>Glycera</taxon>
    </lineage>
</organism>
<proteinExistence type="evidence at protein level"/>